<feature type="chain" id="PRO_0000172035" description="Putative pre-16S rRNA nuclease">
    <location>
        <begin position="1"/>
        <end position="137"/>
    </location>
</feature>
<proteinExistence type="inferred from homology"/>
<accession>Q8K930</accession>
<sequence>MIVIAFDFGLKNIGVAVGENILKKGRALNKLSAKNGSPDWNNIKNLLKIWQPKFLVVGLPLNIDGTRQDITKKAEKFAFLLKYKFNIFVYLHDERLSTKEAKSLIFKKNGFKVLKKEKIHSVAAVIILESWFNQNLY</sequence>
<evidence type="ECO:0000255" key="1">
    <source>
        <dbReference type="HAMAP-Rule" id="MF_00651"/>
    </source>
</evidence>
<comment type="function">
    <text evidence="1">Could be a nuclease involved in processing of the 5'-end of pre-16S rRNA.</text>
</comment>
<comment type="subcellular location">
    <subcellularLocation>
        <location evidence="1">Cytoplasm</location>
    </subcellularLocation>
</comment>
<comment type="similarity">
    <text evidence="1">Belongs to the YqgF nuclease family.</text>
</comment>
<organism>
    <name type="scientific">Buchnera aphidicola subsp. Schizaphis graminum (strain Sg)</name>
    <dbReference type="NCBI Taxonomy" id="198804"/>
    <lineage>
        <taxon>Bacteria</taxon>
        <taxon>Pseudomonadati</taxon>
        <taxon>Pseudomonadota</taxon>
        <taxon>Gammaproteobacteria</taxon>
        <taxon>Enterobacterales</taxon>
        <taxon>Erwiniaceae</taxon>
        <taxon>Buchnera</taxon>
    </lineage>
</organism>
<gene>
    <name evidence="1" type="primary">yqgF</name>
    <name type="ordered locus">BUsg_530</name>
</gene>
<protein>
    <recommendedName>
        <fullName evidence="1">Putative pre-16S rRNA nuclease</fullName>
        <ecNumber evidence="1">3.1.-.-</ecNumber>
    </recommendedName>
</protein>
<dbReference type="EC" id="3.1.-.-" evidence="1"/>
<dbReference type="EMBL" id="AE013218">
    <property type="protein sequence ID" value="AAM68071.1"/>
    <property type="molecule type" value="Genomic_DNA"/>
</dbReference>
<dbReference type="RefSeq" id="WP_044006098.1">
    <property type="nucleotide sequence ID" value="NC_004061.1"/>
</dbReference>
<dbReference type="SMR" id="Q8K930"/>
<dbReference type="STRING" id="198804.BUsg_530"/>
<dbReference type="GeneID" id="93004005"/>
<dbReference type="KEGG" id="bas:BUsg_530"/>
<dbReference type="eggNOG" id="COG0816">
    <property type="taxonomic scope" value="Bacteria"/>
</dbReference>
<dbReference type="HOGENOM" id="CLU_098240_3_0_6"/>
<dbReference type="Proteomes" id="UP000000416">
    <property type="component" value="Chromosome"/>
</dbReference>
<dbReference type="GO" id="GO:0005829">
    <property type="term" value="C:cytosol"/>
    <property type="evidence" value="ECO:0007669"/>
    <property type="project" value="TreeGrafter"/>
</dbReference>
<dbReference type="GO" id="GO:0004518">
    <property type="term" value="F:nuclease activity"/>
    <property type="evidence" value="ECO:0007669"/>
    <property type="project" value="UniProtKB-KW"/>
</dbReference>
<dbReference type="GO" id="GO:0000967">
    <property type="term" value="P:rRNA 5'-end processing"/>
    <property type="evidence" value="ECO:0007669"/>
    <property type="project" value="UniProtKB-UniRule"/>
</dbReference>
<dbReference type="CDD" id="cd16964">
    <property type="entry name" value="YqgF"/>
    <property type="match status" value="1"/>
</dbReference>
<dbReference type="Gene3D" id="3.30.420.140">
    <property type="entry name" value="YqgF/RNase H-like domain"/>
    <property type="match status" value="1"/>
</dbReference>
<dbReference type="HAMAP" id="MF_00651">
    <property type="entry name" value="Nuclease_YqgF"/>
    <property type="match status" value="1"/>
</dbReference>
<dbReference type="InterPro" id="IPR012337">
    <property type="entry name" value="RNaseH-like_sf"/>
</dbReference>
<dbReference type="InterPro" id="IPR005227">
    <property type="entry name" value="YqgF"/>
</dbReference>
<dbReference type="InterPro" id="IPR006641">
    <property type="entry name" value="YqgF/RNaseH-like_dom"/>
</dbReference>
<dbReference type="InterPro" id="IPR037027">
    <property type="entry name" value="YqgF/RNaseH-like_dom_sf"/>
</dbReference>
<dbReference type="NCBIfam" id="TIGR00250">
    <property type="entry name" value="RNAse_H_YqgF"/>
    <property type="match status" value="1"/>
</dbReference>
<dbReference type="PANTHER" id="PTHR33317">
    <property type="entry name" value="POLYNUCLEOTIDYL TRANSFERASE, RIBONUCLEASE H-LIKE SUPERFAMILY PROTEIN"/>
    <property type="match status" value="1"/>
</dbReference>
<dbReference type="PANTHER" id="PTHR33317:SF4">
    <property type="entry name" value="POLYNUCLEOTIDYL TRANSFERASE, RIBONUCLEASE H-LIKE SUPERFAMILY PROTEIN"/>
    <property type="match status" value="1"/>
</dbReference>
<dbReference type="Pfam" id="PF03652">
    <property type="entry name" value="RuvX"/>
    <property type="match status" value="1"/>
</dbReference>
<dbReference type="SMART" id="SM00732">
    <property type="entry name" value="YqgFc"/>
    <property type="match status" value="1"/>
</dbReference>
<dbReference type="SUPFAM" id="SSF53098">
    <property type="entry name" value="Ribonuclease H-like"/>
    <property type="match status" value="1"/>
</dbReference>
<name>YQGF_BUCAP</name>
<keyword id="KW-0963">Cytoplasm</keyword>
<keyword id="KW-0378">Hydrolase</keyword>
<keyword id="KW-0540">Nuclease</keyword>
<keyword id="KW-0690">Ribosome biogenesis</keyword>
<reference key="1">
    <citation type="journal article" date="2002" name="Science">
        <title>50 million years of genomic stasis in endosymbiotic bacteria.</title>
        <authorList>
            <person name="Tamas I."/>
            <person name="Klasson L."/>
            <person name="Canbaeck B."/>
            <person name="Naeslund A.K."/>
            <person name="Eriksson A.-S."/>
            <person name="Wernegreen J.J."/>
            <person name="Sandstroem J.P."/>
            <person name="Moran N.A."/>
            <person name="Andersson S.G.E."/>
        </authorList>
    </citation>
    <scope>NUCLEOTIDE SEQUENCE [LARGE SCALE GENOMIC DNA]</scope>
    <source>
        <strain>Sg</strain>
    </source>
</reference>